<comment type="miscellaneous">
    <text evidence="2">Present with 2140 molecules/cell in log phase SD medium.</text>
</comment>
<gene>
    <name type="ordered locus">YHR127W</name>
</gene>
<dbReference type="EMBL" id="U10398">
    <property type="protein sequence ID" value="AAB68406.1"/>
    <property type="molecule type" value="Genomic_DNA"/>
</dbReference>
<dbReference type="EMBL" id="AY692678">
    <property type="protein sequence ID" value="AAT92697.1"/>
    <property type="molecule type" value="Genomic_DNA"/>
</dbReference>
<dbReference type="EMBL" id="BK006934">
    <property type="protein sequence ID" value="DAA06820.1"/>
    <property type="molecule type" value="Genomic_DNA"/>
</dbReference>
<dbReference type="PIR" id="S48971">
    <property type="entry name" value="S48971"/>
</dbReference>
<dbReference type="RefSeq" id="NP_011995.1">
    <property type="nucleotide sequence ID" value="NM_001179257.1"/>
</dbReference>
<dbReference type="SMR" id="P38833"/>
<dbReference type="BioGRID" id="36560">
    <property type="interactions" value="104"/>
</dbReference>
<dbReference type="DIP" id="DIP-4719N"/>
<dbReference type="FunCoup" id="P38833">
    <property type="interactions" value="309"/>
</dbReference>
<dbReference type="IntAct" id="P38833">
    <property type="interactions" value="22"/>
</dbReference>
<dbReference type="MINT" id="P38833"/>
<dbReference type="STRING" id="4932.YHR127W"/>
<dbReference type="GlyGen" id="P38833">
    <property type="glycosylation" value="1 site, 1 O-linked glycan (1 site)"/>
</dbReference>
<dbReference type="iPTMnet" id="P38833"/>
<dbReference type="PaxDb" id="4932-YHR127W"/>
<dbReference type="PeptideAtlas" id="P38833"/>
<dbReference type="EnsemblFungi" id="YHR127W_mRNA">
    <property type="protein sequence ID" value="YHR127W"/>
    <property type="gene ID" value="YHR127W"/>
</dbReference>
<dbReference type="GeneID" id="856528"/>
<dbReference type="KEGG" id="sce:YHR127W"/>
<dbReference type="AGR" id="SGD:S000001169"/>
<dbReference type="SGD" id="S000001169">
    <property type="gene designation" value="YHR127W"/>
</dbReference>
<dbReference type="VEuPathDB" id="FungiDB:YHR127W"/>
<dbReference type="eggNOG" id="ENOG502S5CR">
    <property type="taxonomic scope" value="Eukaryota"/>
</dbReference>
<dbReference type="HOGENOM" id="CLU_073672_0_0_1"/>
<dbReference type="InParanoid" id="P38833"/>
<dbReference type="OMA" id="DWQSEKA"/>
<dbReference type="OrthoDB" id="4068661at2759"/>
<dbReference type="BioCyc" id="YEAST:G3O-31167-MONOMER"/>
<dbReference type="BioGRID-ORCS" id="856528">
    <property type="hits" value="0 hits in 10 CRISPR screens"/>
</dbReference>
<dbReference type="PRO" id="PR:P38833"/>
<dbReference type="Proteomes" id="UP000002311">
    <property type="component" value="Chromosome VIII"/>
</dbReference>
<dbReference type="RNAct" id="P38833">
    <property type="molecule type" value="protein"/>
</dbReference>
<dbReference type="GO" id="GO:0005634">
    <property type="term" value="C:nucleus"/>
    <property type="evidence" value="ECO:0000314"/>
    <property type="project" value="SGD"/>
</dbReference>
<dbReference type="GO" id="GO:0003676">
    <property type="term" value="F:nucleic acid binding"/>
    <property type="evidence" value="ECO:0007669"/>
    <property type="project" value="InterPro"/>
</dbReference>
<dbReference type="GO" id="GO:0000022">
    <property type="term" value="P:mitotic spindle elongation"/>
    <property type="evidence" value="ECO:0000315"/>
    <property type="project" value="SGD"/>
</dbReference>
<dbReference type="CDD" id="cd00590">
    <property type="entry name" value="RRM_SF"/>
    <property type="match status" value="1"/>
</dbReference>
<dbReference type="InterPro" id="IPR035979">
    <property type="entry name" value="RBD_domain_sf"/>
</dbReference>
<dbReference type="SUPFAM" id="SSF54928">
    <property type="entry name" value="RNA-binding domain, RBD"/>
    <property type="match status" value="1"/>
</dbReference>
<proteinExistence type="evidence at protein level"/>
<organism>
    <name type="scientific">Saccharomyces cerevisiae (strain ATCC 204508 / S288c)</name>
    <name type="common">Baker's yeast</name>
    <dbReference type="NCBI Taxonomy" id="559292"/>
    <lineage>
        <taxon>Eukaryota</taxon>
        <taxon>Fungi</taxon>
        <taxon>Dikarya</taxon>
        <taxon>Ascomycota</taxon>
        <taxon>Saccharomycotina</taxon>
        <taxon>Saccharomycetes</taxon>
        <taxon>Saccharomycetales</taxon>
        <taxon>Saccharomycetaceae</taxon>
        <taxon>Saccharomyces</taxon>
    </lineage>
</organism>
<evidence type="ECO:0000256" key="1">
    <source>
        <dbReference type="SAM" id="MobiDB-lite"/>
    </source>
</evidence>
<evidence type="ECO:0000269" key="2">
    <source>
    </source>
</evidence>
<evidence type="ECO:0007744" key="3">
    <source>
    </source>
</evidence>
<protein>
    <recommendedName>
        <fullName>Uncharacterized protein YHR127W</fullName>
    </recommendedName>
</protein>
<feature type="chain" id="PRO_0000202915" description="Uncharacterized protein YHR127W">
    <location>
        <begin position="1"/>
        <end position="243"/>
    </location>
</feature>
<feature type="region of interest" description="Disordered" evidence="1">
    <location>
        <begin position="71"/>
        <end position="120"/>
    </location>
</feature>
<feature type="compositionally biased region" description="Basic residues" evidence="1">
    <location>
        <begin position="78"/>
        <end position="88"/>
    </location>
</feature>
<feature type="modified residue" description="Phosphoserine" evidence="3">
    <location>
        <position position="96"/>
    </location>
</feature>
<reference key="1">
    <citation type="journal article" date="1994" name="Science">
        <title>Complete nucleotide sequence of Saccharomyces cerevisiae chromosome VIII.</title>
        <authorList>
            <person name="Johnston M."/>
            <person name="Andrews S."/>
            <person name="Brinkman R."/>
            <person name="Cooper J."/>
            <person name="Ding H."/>
            <person name="Dover J."/>
            <person name="Du Z."/>
            <person name="Favello A."/>
            <person name="Fulton L."/>
            <person name="Gattung S."/>
            <person name="Geisel C."/>
            <person name="Kirsten J."/>
            <person name="Kucaba T."/>
            <person name="Hillier L.W."/>
            <person name="Jier M."/>
            <person name="Johnston L."/>
            <person name="Langston Y."/>
            <person name="Latreille P."/>
            <person name="Louis E.J."/>
            <person name="Macri C."/>
            <person name="Mardis E."/>
            <person name="Menezes S."/>
            <person name="Mouser L."/>
            <person name="Nhan M."/>
            <person name="Rifkin L."/>
            <person name="Riles L."/>
            <person name="St Peter H."/>
            <person name="Trevaskis E."/>
            <person name="Vaughan K."/>
            <person name="Vignati D."/>
            <person name="Wilcox L."/>
            <person name="Wohldman P."/>
            <person name="Waterston R."/>
            <person name="Wilson R."/>
            <person name="Vaudin M."/>
        </authorList>
    </citation>
    <scope>NUCLEOTIDE SEQUENCE [LARGE SCALE GENOMIC DNA]</scope>
    <source>
        <strain>ATCC 204508 / S288c</strain>
    </source>
</reference>
<reference key="2">
    <citation type="journal article" date="2014" name="G3 (Bethesda)">
        <title>The reference genome sequence of Saccharomyces cerevisiae: Then and now.</title>
        <authorList>
            <person name="Engel S.R."/>
            <person name="Dietrich F.S."/>
            <person name="Fisk D.G."/>
            <person name="Binkley G."/>
            <person name="Balakrishnan R."/>
            <person name="Costanzo M.C."/>
            <person name="Dwight S.S."/>
            <person name="Hitz B.C."/>
            <person name="Karra K."/>
            <person name="Nash R.S."/>
            <person name="Weng S."/>
            <person name="Wong E.D."/>
            <person name="Lloyd P."/>
            <person name="Skrzypek M.S."/>
            <person name="Miyasato S.R."/>
            <person name="Simison M."/>
            <person name="Cherry J.M."/>
        </authorList>
    </citation>
    <scope>GENOME REANNOTATION</scope>
    <source>
        <strain>ATCC 204508 / S288c</strain>
    </source>
</reference>
<reference key="3">
    <citation type="journal article" date="2007" name="Genome Res.">
        <title>Approaching a complete repository of sequence-verified protein-encoding clones for Saccharomyces cerevisiae.</title>
        <authorList>
            <person name="Hu Y."/>
            <person name="Rolfs A."/>
            <person name="Bhullar B."/>
            <person name="Murthy T.V.S."/>
            <person name="Zhu C."/>
            <person name="Berger M.F."/>
            <person name="Camargo A.A."/>
            <person name="Kelley F."/>
            <person name="McCarron S."/>
            <person name="Jepson D."/>
            <person name="Richardson A."/>
            <person name="Raphael J."/>
            <person name="Moreira D."/>
            <person name="Taycher E."/>
            <person name="Zuo D."/>
            <person name="Mohr S."/>
            <person name="Kane M.F."/>
            <person name="Williamson J."/>
            <person name="Simpson A.J.G."/>
            <person name="Bulyk M.L."/>
            <person name="Harlow E."/>
            <person name="Marsischky G."/>
            <person name="Kolodner R.D."/>
            <person name="LaBaer J."/>
        </authorList>
    </citation>
    <scope>NUCLEOTIDE SEQUENCE [GENOMIC DNA]</scope>
    <source>
        <strain>ATCC 204508 / S288c</strain>
    </source>
</reference>
<reference key="4">
    <citation type="journal article" date="2003" name="Nature">
        <title>Global analysis of protein expression in yeast.</title>
        <authorList>
            <person name="Ghaemmaghami S."/>
            <person name="Huh W.-K."/>
            <person name="Bower K."/>
            <person name="Howson R.W."/>
            <person name="Belle A."/>
            <person name="Dephoure N."/>
            <person name="O'Shea E.K."/>
            <person name="Weissman J.S."/>
        </authorList>
    </citation>
    <scope>LEVEL OF PROTEIN EXPRESSION [LARGE SCALE ANALYSIS]</scope>
</reference>
<reference key="5">
    <citation type="journal article" date="2007" name="J. Proteome Res.">
        <title>Large-scale phosphorylation analysis of alpha-factor-arrested Saccharomyces cerevisiae.</title>
        <authorList>
            <person name="Li X."/>
            <person name="Gerber S.A."/>
            <person name="Rudner A.D."/>
            <person name="Beausoleil S.A."/>
            <person name="Haas W."/>
            <person name="Villen J."/>
            <person name="Elias J.E."/>
            <person name="Gygi S.P."/>
        </authorList>
    </citation>
    <scope>PHOSPHORYLATION [LARGE SCALE ANALYSIS] AT SER-96</scope>
    <scope>IDENTIFICATION BY MASS SPECTROMETRY [LARGE SCALE ANALYSIS]</scope>
    <source>
        <strain>ADR376</strain>
    </source>
</reference>
<reference key="6">
    <citation type="journal article" date="2008" name="Mol. Cell. Proteomics">
        <title>A multidimensional chromatography technology for in-depth phosphoproteome analysis.</title>
        <authorList>
            <person name="Albuquerque C.P."/>
            <person name="Smolka M.B."/>
            <person name="Payne S.H."/>
            <person name="Bafna V."/>
            <person name="Eng J."/>
            <person name="Zhou H."/>
        </authorList>
    </citation>
    <scope>IDENTIFICATION BY MASS SPECTROMETRY [LARGE SCALE ANALYSIS]</scope>
</reference>
<reference key="7">
    <citation type="journal article" date="2009" name="Science">
        <title>Global analysis of Cdk1 substrate phosphorylation sites provides insights into evolution.</title>
        <authorList>
            <person name="Holt L.J."/>
            <person name="Tuch B.B."/>
            <person name="Villen J."/>
            <person name="Johnson A.D."/>
            <person name="Gygi S.P."/>
            <person name="Morgan D.O."/>
        </authorList>
    </citation>
    <scope>IDENTIFICATION BY MASS SPECTROMETRY [LARGE SCALE ANALYSIS]</scope>
</reference>
<sequence>MARNRTTSKKNVQSKRLIDRVVPMDKIKKVGVAKKKTVEHTKEGFSVVNGKLVSSNDVGVLLREAQGAIDKRTNVSQRNRKKGIKNNRPHKDINSSPDWGNAHRGTDWQSEKANGMNRAKNSRNFTTNIKLQRQHFGEEIQGGSQLVISTNSDASDKLLMLFNLTLGVNQENLKNVLENISQVQIAQIRVRDLPSGSATAKVRLAYPTTQSLEKVRKLFHGALVDGRRIQVVIASDESSHLSY</sequence>
<accession>P38833</accession>
<accession>D3DL76</accession>
<name>YHS7_YEAST</name>
<keyword id="KW-0597">Phosphoprotein</keyword>
<keyword id="KW-1185">Reference proteome</keyword>